<sequence>MRECISIHVGQAGVQIGNACWELYCLEHGIQPDGQMPSDKTIGGGDDSFNTFFSETGAGKHVPRAVFVDLEPTVIDEVRTGTYRQLFHPEQLITGKEDAANNYARGHYTIGKEIIDLVLDRIRKLADQCTGLQGFSVFHSFGGGTGSGFTSLLMERLSVDYGKKSKLEFSIYPAPQVSTAVVEPYNSILTTHTTLEHSDCAFMVDNEAIYDICRRNLDIERPTYTNLNRLIGQIVSSITASLRFDGALNVDLTEFQTNLVPYPRAHFPLATYAPVISAEKAYHEQLSVAEITNACFEPANQMVKCDPRHGKYMACCLLYRGDVVPKDVNAAIATIKTKRTIQFVDWCPTGFKVGINYEPPTVVPGGDLAKVQRAVCMLSNTTAIAEAWARLDHKFDLMYAKRAFVHWYVGEGMEEGEFSEAREDMAALEKDYEEVGVDSVEGEGEEEGEEY</sequence>
<reference key="1">
    <citation type="journal article" date="1981" name="Proc. Natl. Acad. Sci. U.S.A.">
        <title>Complete amino acid sequence of alpha-tubulin from porcine brain.</title>
        <authorList>
            <person name="Ponstingl H."/>
            <person name="Krauhs E."/>
            <person name="Little M."/>
            <person name="Kempf T."/>
        </authorList>
    </citation>
    <scope>PROTEIN SEQUENCE</scope>
    <source>
        <tissue>Brain</tissue>
    </source>
</reference>
<reference key="2">
    <citation type="journal article" date="1983" name="Arch. Biochem. Biophys.">
        <title>Localization of the ATP binding site on alpha-tubulin.</title>
        <authorList>
            <person name="Zabrecky J.R."/>
            <person name="Cole R.D."/>
        </authorList>
    </citation>
    <scope>BINDING SITE</scope>
</reference>
<reference key="3">
    <citation type="journal article" date="1981" name="Biochemistry">
        <title>Kinetic analysis of guanosine 5'-triphosphate hydrolysis associated with tubulin polymerization.</title>
        <authorList>
            <person name="Carlier M.F."/>
            <person name="Pantaloni D."/>
        </authorList>
    </citation>
    <scope>FUNCTION</scope>
    <scope>SUBCELLULAR LOCATION</scope>
    <scope>SUBUNIT</scope>
</reference>
<evidence type="ECO:0000250" key="1">
    <source>
        <dbReference type="UniProtKB" id="P68363"/>
    </source>
</evidence>
<evidence type="ECO:0000250" key="2">
    <source>
        <dbReference type="UniProtKB" id="P68369"/>
    </source>
</evidence>
<evidence type="ECO:0000250" key="3">
    <source>
        <dbReference type="UniProtKB" id="P68373"/>
    </source>
</evidence>
<evidence type="ECO:0000250" key="4">
    <source>
        <dbReference type="UniProtKB" id="Q71U36"/>
    </source>
</evidence>
<evidence type="ECO:0000269" key="5">
    <source>
    </source>
</evidence>
<evidence type="ECO:0000305" key="6"/>
<evidence type="ECO:0007829" key="7">
    <source>
        <dbReference type="PDB" id="7X4N"/>
    </source>
</evidence>
<keyword id="KW-0002">3D-structure</keyword>
<keyword id="KW-0007">Acetylation</keyword>
<keyword id="KW-0966">Cell projection</keyword>
<keyword id="KW-0969">Cilium</keyword>
<keyword id="KW-0963">Cytoplasm</keyword>
<keyword id="KW-0206">Cytoskeleton</keyword>
<keyword id="KW-0903">Direct protein sequencing</keyword>
<keyword id="KW-0282">Flagellum</keyword>
<keyword id="KW-0342">GTP-binding</keyword>
<keyword id="KW-0378">Hydrolase</keyword>
<keyword id="KW-1017">Isopeptide bond</keyword>
<keyword id="KW-0460">Magnesium</keyword>
<keyword id="KW-0479">Metal-binding</keyword>
<keyword id="KW-0488">Methylation</keyword>
<keyword id="KW-0493">Microtubule</keyword>
<keyword id="KW-0944">Nitration</keyword>
<keyword id="KW-0547">Nucleotide-binding</keyword>
<keyword id="KW-0597">Phosphoprotein</keyword>
<keyword id="KW-1185">Reference proteome</keyword>
<accession>P02550</accession>
<comment type="function">
    <text evidence="5">Tubulin is the major constituent of microtubules, protein filaments consisting of alpha- and beta-tubulin heterodimers (PubMed:7225365). Microtubules grow by the addition of GTP-tubulin dimers to the microtubule end, where a stabilizing cap forms (PubMed:7225365). Below the cap, tubulin dimers are in GDP-bound state, owing to GTPase activity of alpha-tubulin (PubMed:7225365).</text>
</comment>
<comment type="catalytic activity">
    <reaction evidence="1">
        <text>GTP + H2O = GDP + phosphate + H(+)</text>
        <dbReference type="Rhea" id="RHEA:19669"/>
        <dbReference type="ChEBI" id="CHEBI:15377"/>
        <dbReference type="ChEBI" id="CHEBI:15378"/>
        <dbReference type="ChEBI" id="CHEBI:37565"/>
        <dbReference type="ChEBI" id="CHEBI:43474"/>
        <dbReference type="ChEBI" id="CHEBI:58189"/>
    </reaction>
    <physiologicalReaction direction="left-to-right" evidence="1">
        <dbReference type="Rhea" id="RHEA:19670"/>
    </physiologicalReaction>
</comment>
<comment type="cofactor">
    <cofactor evidence="1">
        <name>Mg(2+)</name>
        <dbReference type="ChEBI" id="CHEBI:18420"/>
    </cofactor>
</comment>
<comment type="subunit">
    <text evidence="1 2 5">Heterodimer of alpha- and beta-tubulin (PubMed:7225365). A typical microtubule is a hollow water-filled tube with an outer diameter of 25 nm and an inner diameter of 15 nM (By similarity). Alpha-beta heterodimers associate head-to-tail to form protofilaments running lengthwise along the microtubule wall with the beta-tubulin subunit facing the microtubule plus end conferring a structural polarity (By similarity). Microtubules usually have 13 protofilaments but different protofilament numbers can be found in some organisms and specialized cells (By similarity). Interacts with gamma-tubulin; the interaction allows microtubules to nucleate from the gamma-tubulin ring complex (gTuRC) (By similarity). Nascent microtubule interacts (via alpha-tubulin MREC motif) with TTC5/STRAP; this interaction may result in tubulin mRNA-targeted degradation (By similarity). Component of sperm flagellar doublet microtubules (By similarity).</text>
</comment>
<comment type="subcellular location">
    <subcellularLocation>
        <location evidence="5">Cytoplasm</location>
        <location evidence="5">Cytoskeleton</location>
    </subcellularLocation>
    <subcellularLocation>
        <location evidence="2">Cytoplasm</location>
        <location evidence="2">Cytoskeleton</location>
        <location evidence="2">Flagellum axoneme</location>
    </subcellularLocation>
</comment>
<comment type="PTM">
    <text evidence="2">Some glutamate residues at the C-terminus are polyglycylated, resulting in polyglycine chains on the gamma-carboxyl group. Glycylation is mainly limited to tubulin incorporated into axonemes (cilia and flagella) whereas glutamylation is prevalent in neuronal cells, centrioles, axonemes, and the mitotic spindle. Both modifications can coexist on the same protein on adjacent residues, and lowering polyglycylation levels increases polyglutamylation, and reciprocally. Cilia and flagella glycylation is required for their stability and maintenance. Flagella glycylation controls sperm motility.</text>
</comment>
<comment type="PTM">
    <text evidence="2 4">Some glutamate residues at the C-terminus are polyglutamylated, resulting in polyglutamate chains on the gamma-carboxyl group (By similarity). Polyglutamylation plays a key role in microtubule severing by spastin (SPAST). SPAST preferentially recognizes and acts on microtubules decorated with short polyglutamate tails: severing activity by SPAST increases as the number of glutamates per tubulin rises from one to eight, but decreases beyond this glutamylation threshold (By similarity). Glutamylation is also involved in cilia motility (By similarity).</text>
</comment>
<comment type="PTM">
    <text evidence="4">Acetylation of alpha chains at Lys-40 is located inside the microtubule lumen. This modification has been correlated with increased microtubule stability, intracellular transport and ciliary assembly.</text>
</comment>
<comment type="PTM">
    <text evidence="1">Methylation of alpha chains at Lys-40 is found in mitotic microtubules and is required for normal mitosis and cytokinesis contributing to genomic stability.</text>
</comment>
<comment type="PTM">
    <text evidence="4">Nitration of Tyr-451 is irreversible and interferes with normal dynein intracellular distribution.</text>
</comment>
<comment type="PTM">
    <text evidence="2 4">Undergoes a tyrosination/detyrosination cycle, the cyclic removal and re-addition of a C-terminal tyrosine residue by the enzymes tubulin tyrosine carboxypeptidase (MATCAP1, VASH1 or VASH2) and tubulin tyrosine ligase (TTL), respectively.</text>
</comment>
<comment type="PTM">
    <molecule>Tubulin alpha-1A chain</molecule>
    <text evidence="2 4">Tyrosination promotes microtubule interaction with CAP-Gly domain-containing proteins such as CLIP1, CLIP2 and DCTN1 (By similarity). Tyrosination regulates the initiation of dynein-dynactin motility via interaction with DCTN1, which brings the dynein-dynactin complex into contact with microtubules. In neurons, tyrosinated tubulins mediate the initiation of retrograde vesicle transport (By similarity).</text>
</comment>
<comment type="PTM">
    <molecule>Detyrosinated tubulin alpha-1A chain</molecule>
    <text evidence="2 4">Detyrosination is involved in metaphase plate congression by guiding chromosomes during mitosis: detyrosination promotes interaction with CENPE, promoting pole-proximal transport of chromosomes toward the equator (By similarity). Detyrosination increases microtubules-dependent mechanotransduction in dystrophic cardiac and skeletal muscle. In cardiomyocytes, detyrosinated microtubules are required to resist to contractile compression during contraction: detyrosination promotes association with desmin (DES) at force-generating sarcomeres, leading to buckled microtubules and mechanical resistance to contraction (By similarity).</text>
</comment>
<comment type="miscellaneous">
    <text>The highly acidic C-terminal region may bind cations such as calcium.</text>
</comment>
<comment type="similarity">
    <text evidence="6">Belongs to the tubulin family.</text>
</comment>
<feature type="chain" id="PRO_0000048131" description="Tubulin alpha-1A chain">
    <location>
        <begin position="1"/>
        <end position="451"/>
    </location>
</feature>
<feature type="chain" id="PRO_0000437381" description="Detyrosinated tubulin alpha-1A chain" evidence="4">
    <location>
        <begin position="1"/>
        <end position="450"/>
    </location>
</feature>
<feature type="active site" evidence="1">
    <location>
        <position position="254"/>
    </location>
</feature>
<feature type="binding site" evidence="1">
    <location>
        <position position="10"/>
    </location>
    <ligand>
        <name>GTP</name>
        <dbReference type="ChEBI" id="CHEBI:37565"/>
    </ligand>
</feature>
<feature type="binding site" evidence="1">
    <location>
        <position position="11"/>
    </location>
    <ligand>
        <name>GTP</name>
        <dbReference type="ChEBI" id="CHEBI:37565"/>
    </ligand>
</feature>
<feature type="binding site" evidence="1">
    <location>
        <position position="12"/>
    </location>
    <ligand>
        <name>GTP</name>
        <dbReference type="ChEBI" id="CHEBI:37565"/>
    </ligand>
</feature>
<feature type="binding site" evidence="1">
    <location>
        <position position="15"/>
    </location>
    <ligand>
        <name>GTP</name>
        <dbReference type="ChEBI" id="CHEBI:37565"/>
    </ligand>
</feature>
<feature type="binding site" evidence="1">
    <location>
        <position position="71"/>
    </location>
    <ligand>
        <name>GTP</name>
        <dbReference type="ChEBI" id="CHEBI:37565"/>
    </ligand>
</feature>
<feature type="binding site" evidence="1">
    <location>
        <position position="71"/>
    </location>
    <ligand>
        <name>Mg(2+)</name>
        <dbReference type="ChEBI" id="CHEBI:18420"/>
    </ligand>
</feature>
<feature type="binding site" evidence="1">
    <location>
        <position position="99"/>
    </location>
    <ligand>
        <name>GTP</name>
        <dbReference type="ChEBI" id="CHEBI:37565"/>
    </ligand>
</feature>
<feature type="binding site" evidence="1">
    <location>
        <position position="140"/>
    </location>
    <ligand>
        <name>GTP</name>
        <dbReference type="ChEBI" id="CHEBI:37565"/>
    </ligand>
</feature>
<feature type="binding site" evidence="1">
    <location>
        <position position="143"/>
    </location>
    <ligand>
        <name>GTP</name>
        <dbReference type="ChEBI" id="CHEBI:37565"/>
    </ligand>
</feature>
<feature type="binding site" evidence="1">
    <location>
        <position position="144"/>
    </location>
    <ligand>
        <name>GTP</name>
        <dbReference type="ChEBI" id="CHEBI:37565"/>
    </ligand>
</feature>
<feature type="binding site" evidence="1">
    <location>
        <position position="145"/>
    </location>
    <ligand>
        <name>GTP</name>
        <dbReference type="ChEBI" id="CHEBI:37565"/>
    </ligand>
</feature>
<feature type="binding site" evidence="1">
    <location>
        <position position="146"/>
    </location>
    <ligand>
        <name>GTP</name>
        <dbReference type="ChEBI" id="CHEBI:37565"/>
    </ligand>
</feature>
<feature type="binding site" evidence="1">
    <location>
        <position position="179"/>
    </location>
    <ligand>
        <name>GTP</name>
        <dbReference type="ChEBI" id="CHEBI:37565"/>
    </ligand>
</feature>
<feature type="binding site" evidence="1">
    <location>
        <position position="183"/>
    </location>
    <ligand>
        <name>GTP</name>
        <dbReference type="ChEBI" id="CHEBI:37565"/>
    </ligand>
</feature>
<feature type="binding site" evidence="1">
    <location>
        <position position="206"/>
    </location>
    <ligand>
        <name>GTP</name>
        <dbReference type="ChEBI" id="CHEBI:37565"/>
    </ligand>
</feature>
<feature type="binding site" evidence="1">
    <location>
        <position position="224"/>
    </location>
    <ligand>
        <name>GTP</name>
        <dbReference type="ChEBI" id="CHEBI:37565"/>
    </ligand>
</feature>
<feature type="binding site" evidence="1">
    <location>
        <position position="228"/>
    </location>
    <ligand>
        <name>GTP</name>
        <dbReference type="ChEBI" id="CHEBI:37565"/>
    </ligand>
</feature>
<feature type="binding site" evidence="1">
    <location>
        <position position="252"/>
    </location>
    <ligand>
        <name>GTP</name>
        <dbReference type="ChEBI" id="CHEBI:37565"/>
    </ligand>
</feature>
<feature type="site" description="Involved in polymerization">
    <location>
        <position position="451"/>
    </location>
</feature>
<feature type="modified residue" description="N6-acetyllysine" evidence="4">
    <location>
        <position position="40"/>
    </location>
</feature>
<feature type="modified residue" description="3'-nitrotyrosine" evidence="3">
    <location>
        <position position="282"/>
    </location>
</feature>
<feature type="modified residue" description="Phosphoserine" evidence="3">
    <location>
        <position position="439"/>
    </location>
</feature>
<feature type="modified residue" description="5-glutamyl polyglutamate" evidence="4">
    <location>
        <position position="443"/>
    </location>
</feature>
<feature type="modified residue" description="5-glutamyl polyglutamate" evidence="2">
    <location>
        <position position="445"/>
    </location>
</feature>
<feature type="modified residue" description="3'-nitrotyrosine" evidence="4">
    <location>
        <position position="451"/>
    </location>
</feature>
<feature type="sequence variant">
    <original>A</original>
    <variation>G</variation>
    <location>
        <position position="265"/>
    </location>
</feature>
<feature type="sequence variant">
    <original>A</original>
    <variation>I</variation>
    <location>
        <position position="265"/>
    </location>
</feature>
<feature type="sequence variant">
    <original>H</original>
    <variation>I</variation>
    <location>
        <position position="266"/>
    </location>
</feature>
<feature type="sequence variant">
    <original>TYA</original>
    <variation>RFB</variation>
    <location>
        <begin position="271"/>
        <end position="273"/>
    </location>
</feature>
<feature type="strand" evidence="7">
    <location>
        <begin position="5"/>
        <end position="9"/>
    </location>
</feature>
<feature type="helix" evidence="7">
    <location>
        <begin position="10"/>
        <end position="27"/>
    </location>
</feature>
<feature type="helix" evidence="7">
    <location>
        <begin position="38"/>
        <end position="40"/>
    </location>
</feature>
<feature type="strand" evidence="7">
    <location>
        <begin position="51"/>
        <end position="55"/>
    </location>
</feature>
<feature type="strand" evidence="7">
    <location>
        <begin position="59"/>
        <end position="72"/>
    </location>
</feature>
<feature type="helix" evidence="7">
    <location>
        <begin position="73"/>
        <end position="79"/>
    </location>
</feature>
<feature type="turn" evidence="7">
    <location>
        <begin position="82"/>
        <end position="86"/>
    </location>
</feature>
<feature type="helix" evidence="7">
    <location>
        <begin position="89"/>
        <end position="91"/>
    </location>
</feature>
<feature type="strand" evidence="7">
    <location>
        <begin position="92"/>
        <end position="94"/>
    </location>
</feature>
<feature type="helix" evidence="7">
    <location>
        <begin position="103"/>
        <end position="107"/>
    </location>
</feature>
<feature type="turn" evidence="7">
    <location>
        <begin position="112"/>
        <end position="114"/>
    </location>
</feature>
<feature type="helix" evidence="7">
    <location>
        <begin position="115"/>
        <end position="126"/>
    </location>
</feature>
<feature type="strand" evidence="7">
    <location>
        <begin position="134"/>
        <end position="143"/>
    </location>
</feature>
<feature type="helix" evidence="7">
    <location>
        <begin position="144"/>
        <end position="157"/>
    </location>
</feature>
<feature type="turn" evidence="7">
    <location>
        <begin position="158"/>
        <end position="163"/>
    </location>
</feature>
<feature type="strand" evidence="7">
    <location>
        <begin position="164"/>
        <end position="172"/>
    </location>
</feature>
<feature type="helix" evidence="7">
    <location>
        <begin position="175"/>
        <end position="177"/>
    </location>
</feature>
<feature type="helix" evidence="7">
    <location>
        <begin position="183"/>
        <end position="195"/>
    </location>
</feature>
<feature type="strand" evidence="7">
    <location>
        <begin position="199"/>
        <end position="205"/>
    </location>
</feature>
<feature type="helix" evidence="7">
    <location>
        <begin position="206"/>
        <end position="215"/>
    </location>
</feature>
<feature type="helix" evidence="7">
    <location>
        <begin position="224"/>
        <end position="238"/>
    </location>
</feature>
<feature type="helix" evidence="7">
    <location>
        <begin position="241"/>
        <end position="243"/>
    </location>
</feature>
<feature type="strand" evidence="7">
    <location>
        <begin position="247"/>
        <end position="249"/>
    </location>
</feature>
<feature type="helix" evidence="7">
    <location>
        <begin position="252"/>
        <end position="259"/>
    </location>
</feature>
<feature type="strand" evidence="7">
    <location>
        <begin position="261"/>
        <end position="264"/>
    </location>
</feature>
<feature type="strand" evidence="7">
    <location>
        <begin position="269"/>
        <end position="273"/>
    </location>
</feature>
<feature type="helix" evidence="7">
    <location>
        <begin position="288"/>
        <end position="293"/>
    </location>
</feature>
<feature type="helix" evidence="7">
    <location>
        <begin position="294"/>
        <end position="296"/>
    </location>
</feature>
<feature type="turn" evidence="7">
    <location>
        <begin position="298"/>
        <end position="300"/>
    </location>
</feature>
<feature type="strand" evidence="7">
    <location>
        <begin position="301"/>
        <end position="303"/>
    </location>
</feature>
<feature type="helix" evidence="7">
    <location>
        <begin position="307"/>
        <end position="309"/>
    </location>
</feature>
<feature type="strand" evidence="7">
    <location>
        <begin position="316"/>
        <end position="322"/>
    </location>
</feature>
<feature type="helix" evidence="7">
    <location>
        <begin position="325"/>
        <end position="338"/>
    </location>
</feature>
<feature type="strand" evidence="7">
    <location>
        <begin position="352"/>
        <end position="355"/>
    </location>
</feature>
<feature type="strand" evidence="7">
    <location>
        <begin position="366"/>
        <end position="368"/>
    </location>
</feature>
<feature type="strand" evidence="7">
    <location>
        <begin position="372"/>
        <end position="379"/>
    </location>
</feature>
<feature type="helix" evidence="7">
    <location>
        <begin position="382"/>
        <end position="384"/>
    </location>
</feature>
<feature type="helix" evidence="7">
    <location>
        <begin position="385"/>
        <end position="399"/>
    </location>
</feature>
<feature type="turn" evidence="7">
    <location>
        <begin position="400"/>
        <end position="404"/>
    </location>
</feature>
<feature type="helix" evidence="7">
    <location>
        <begin position="405"/>
        <end position="409"/>
    </location>
</feature>
<feature type="turn" evidence="7">
    <location>
        <begin position="410"/>
        <end position="412"/>
    </location>
</feature>
<feature type="helix" evidence="7">
    <location>
        <begin position="415"/>
        <end position="435"/>
    </location>
</feature>
<proteinExistence type="evidence at protein level"/>
<organism>
    <name type="scientific">Sus scrofa</name>
    <name type="common">Pig</name>
    <dbReference type="NCBI Taxonomy" id="9823"/>
    <lineage>
        <taxon>Eukaryota</taxon>
        <taxon>Metazoa</taxon>
        <taxon>Chordata</taxon>
        <taxon>Craniata</taxon>
        <taxon>Vertebrata</taxon>
        <taxon>Euteleostomi</taxon>
        <taxon>Mammalia</taxon>
        <taxon>Eutheria</taxon>
        <taxon>Laurasiatheria</taxon>
        <taxon>Artiodactyla</taxon>
        <taxon>Suina</taxon>
        <taxon>Suidae</taxon>
        <taxon>Sus</taxon>
    </lineage>
</organism>
<name>TBA1A_PIG</name>
<protein>
    <recommendedName>
        <fullName>Tubulin alpha-1A chain</fullName>
        <ecNumber evidence="1">3.6.5.-</ecNumber>
    </recommendedName>
    <alternativeName>
        <fullName>Alpha-tubulin 1</fullName>
    </alternativeName>
    <alternativeName>
        <fullName>Tubulin alpha-1 chain</fullName>
    </alternativeName>
    <component>
        <recommendedName>
            <fullName>Detyrosinated tubulin alpha-1A chain</fullName>
        </recommendedName>
    </component>
</protein>
<dbReference type="EC" id="3.6.5.-" evidence="1"/>
<dbReference type="PIR" id="A93874">
    <property type="entry name" value="UBPGA"/>
</dbReference>
<dbReference type="PDB" id="1FFX">
    <property type="method" value="X-ray"/>
    <property type="resolution" value="3.95 A"/>
    <property type="chains" value="A/C=1-451"/>
</dbReference>
<dbReference type="PDB" id="1IA0">
    <property type="method" value="EM"/>
    <property type="resolution" value="15.00 A"/>
    <property type="chains" value="A=1-451"/>
</dbReference>
<dbReference type="PDB" id="1TUB">
    <property type="method" value="X-ray"/>
    <property type="resolution" value="3.70 A"/>
    <property type="chains" value="A=1-440"/>
</dbReference>
<dbReference type="PDB" id="2HXF">
    <property type="method" value="EM"/>
    <property type="resolution" value="10.00 A"/>
    <property type="chains" value="A=1-451"/>
</dbReference>
<dbReference type="PDB" id="2HXH">
    <property type="method" value="EM"/>
    <property type="resolution" value="11.00 A"/>
    <property type="chains" value="A=1-451"/>
</dbReference>
<dbReference type="PDB" id="2P4N">
    <property type="method" value="EM"/>
    <property type="resolution" value="9.00 A"/>
    <property type="chains" value="A=1-451"/>
</dbReference>
<dbReference type="PDB" id="3EDL">
    <property type="method" value="EM"/>
    <property type="resolution" value="28.00 A"/>
    <property type="chains" value="A=1-451"/>
</dbReference>
<dbReference type="PDB" id="3J6E">
    <property type="method" value="EM"/>
    <property type="resolution" value="4.70 A"/>
    <property type="chains" value="A/C/E/G/I/K/M/O/Q=1-439"/>
</dbReference>
<dbReference type="PDB" id="3J6F">
    <property type="method" value="EM"/>
    <property type="resolution" value="4.90 A"/>
    <property type="chains" value="A/C/E/G/I/K/M/O/Q=1-439"/>
</dbReference>
<dbReference type="PDB" id="3J6G">
    <property type="method" value="EM"/>
    <property type="resolution" value="5.50 A"/>
    <property type="chains" value="A/C/E/G/I/K/M/O/Q=1-439"/>
</dbReference>
<dbReference type="PDB" id="3J6H">
    <property type="method" value="EM"/>
    <property type="resolution" value="8.10 A"/>
    <property type="chains" value="A=2-437"/>
</dbReference>
<dbReference type="PDB" id="3J6P">
    <property type="method" value="EM"/>
    <property type="resolution" value="8.20 A"/>
    <property type="chains" value="A=1-451"/>
</dbReference>
<dbReference type="PDB" id="3J7I">
    <property type="method" value="EM"/>
    <property type="resolution" value="8.90 A"/>
    <property type="chains" value="A=1-451"/>
</dbReference>
<dbReference type="PDB" id="4ABO">
    <property type="method" value="EM"/>
    <property type="resolution" value="8.60 A"/>
    <property type="chains" value="B/D/F/H=1-451"/>
</dbReference>
<dbReference type="PDB" id="5MM4">
    <property type="method" value="EM"/>
    <property type="resolution" value="4.50 A"/>
    <property type="chains" value="A=1-439"/>
</dbReference>
<dbReference type="PDB" id="5MM7">
    <property type="method" value="EM"/>
    <property type="resolution" value="5.10 A"/>
    <property type="chains" value="A=1-439"/>
</dbReference>
<dbReference type="PDB" id="5XXT">
    <property type="method" value="EM"/>
    <property type="resolution" value="5.35 A"/>
    <property type="chains" value="A/C/E/G/I/K/M/O/Q=2-439"/>
</dbReference>
<dbReference type="PDB" id="5XXV">
    <property type="method" value="EM"/>
    <property type="resolution" value="6.46 A"/>
    <property type="chains" value="A/C/E/G/I/K/M/O/Q=2-439"/>
</dbReference>
<dbReference type="PDB" id="5XXW">
    <property type="method" value="EM"/>
    <property type="resolution" value="6.00 A"/>
    <property type="chains" value="A/C/E/G/I/K/M/O/Q=2-439"/>
</dbReference>
<dbReference type="PDB" id="5XXX">
    <property type="method" value="EM"/>
    <property type="resolution" value="6.43 A"/>
    <property type="chains" value="A/C/E/G/I/K/M/O/Q=2-439"/>
</dbReference>
<dbReference type="PDB" id="6KIO">
    <property type="method" value="EM"/>
    <property type="resolution" value="3.94 A"/>
    <property type="chains" value="a=2-439"/>
</dbReference>
<dbReference type="PDB" id="6KIQ">
    <property type="method" value="EM"/>
    <property type="resolution" value="3.62 A"/>
    <property type="chains" value="a=2-439"/>
</dbReference>
<dbReference type="PDB" id="6MLQ">
    <property type="method" value="EM"/>
    <property type="resolution" value="4.20 A"/>
    <property type="chains" value="A=1-451"/>
</dbReference>
<dbReference type="PDB" id="6MLR">
    <property type="method" value="EM"/>
    <property type="resolution" value="4.20 A"/>
    <property type="chains" value="A=1-451"/>
</dbReference>
<dbReference type="PDB" id="6MZE">
    <property type="method" value="X-ray"/>
    <property type="resolution" value="3.60 A"/>
    <property type="chains" value="A/C/H/J/O/Q/V/X=1-451"/>
</dbReference>
<dbReference type="PDB" id="6MZF">
    <property type="method" value="X-ray"/>
    <property type="resolution" value="4.40 A"/>
    <property type="chains" value="A/C/H/J/O/Q/V/X=1-451"/>
</dbReference>
<dbReference type="PDB" id="6MZG">
    <property type="method" value="X-ray"/>
    <property type="resolution" value="3.21 A"/>
    <property type="chains" value="A/C/G/I=1-451"/>
</dbReference>
<dbReference type="PDB" id="6VPO">
    <property type="method" value="EM"/>
    <property type="resolution" value="4.40 A"/>
    <property type="chains" value="A=1-451"/>
</dbReference>
<dbReference type="PDB" id="6VPP">
    <property type="method" value="EM"/>
    <property type="resolution" value="4.40 A"/>
    <property type="chains" value="A=1-451"/>
</dbReference>
<dbReference type="PDB" id="7RS5">
    <property type="method" value="EM"/>
    <property type="resolution" value="3.90 A"/>
    <property type="chains" value="A/C/E/G/I/L/N/P/R=1-451"/>
</dbReference>
<dbReference type="PDB" id="7RX0">
    <property type="method" value="EM"/>
    <property type="resolution" value="3.89 A"/>
    <property type="chains" value="A=1-451"/>
</dbReference>
<dbReference type="PDB" id="7U0F">
    <property type="method" value="EM"/>
    <property type="resolution" value="3.53 A"/>
    <property type="chains" value="A/C=1-451"/>
</dbReference>
<dbReference type="PDB" id="7X4N">
    <property type="method" value="X-ray"/>
    <property type="resolution" value="2.88 A"/>
    <property type="chains" value="A=1-451"/>
</dbReference>
<dbReference type="PDB" id="8QAU">
    <property type="method" value="EM"/>
    <property type="resolution" value="3.54 A"/>
    <property type="chains" value="C=1-451"/>
</dbReference>
<dbReference type="PDB" id="8X9P">
    <property type="method" value="EM"/>
    <property type="resolution" value="3.54 A"/>
    <property type="chains" value="A=1-439"/>
</dbReference>
<dbReference type="PDBsum" id="1FFX"/>
<dbReference type="PDBsum" id="1IA0"/>
<dbReference type="PDBsum" id="1TUB"/>
<dbReference type="PDBsum" id="2HXF"/>
<dbReference type="PDBsum" id="2HXH"/>
<dbReference type="PDBsum" id="2P4N"/>
<dbReference type="PDBsum" id="3EDL"/>
<dbReference type="PDBsum" id="3J6E"/>
<dbReference type="PDBsum" id="3J6F"/>
<dbReference type="PDBsum" id="3J6G"/>
<dbReference type="PDBsum" id="3J6H"/>
<dbReference type="PDBsum" id="3J6P"/>
<dbReference type="PDBsum" id="3J7I"/>
<dbReference type="PDBsum" id="4ABO"/>
<dbReference type="PDBsum" id="5MM4"/>
<dbReference type="PDBsum" id="5MM7"/>
<dbReference type="PDBsum" id="5XXT"/>
<dbReference type="PDBsum" id="5XXV"/>
<dbReference type="PDBsum" id="5XXW"/>
<dbReference type="PDBsum" id="5XXX"/>
<dbReference type="PDBsum" id="6KIO"/>
<dbReference type="PDBsum" id="6KIQ"/>
<dbReference type="PDBsum" id="6MLQ"/>
<dbReference type="PDBsum" id="6MLR"/>
<dbReference type="PDBsum" id="6MZE"/>
<dbReference type="PDBsum" id="6MZF"/>
<dbReference type="PDBsum" id="6MZG"/>
<dbReference type="PDBsum" id="6VPO"/>
<dbReference type="PDBsum" id="6VPP"/>
<dbReference type="PDBsum" id="7RS5"/>
<dbReference type="PDBsum" id="7RX0"/>
<dbReference type="PDBsum" id="7U0F"/>
<dbReference type="PDBsum" id="7X4N"/>
<dbReference type="PDBsum" id="8QAU"/>
<dbReference type="PDBsum" id="8X9P"/>
<dbReference type="EMDB" id="EMD-1340"/>
<dbReference type="EMDB" id="EMD-18304"/>
<dbReference type="EMDB" id="EMD-2005"/>
<dbReference type="EMDB" id="EMD-21314"/>
<dbReference type="EMDB" id="EMD-21315"/>
<dbReference type="EMDB" id="EMD-24666"/>
<dbReference type="EMDB" id="EMD-24721"/>
<dbReference type="EMDB" id="EMD-26257"/>
<dbReference type="EMDB" id="EMD-2697"/>
<dbReference type="EMDB" id="EMD-2912"/>
<dbReference type="EMDB" id="EMD-2915"/>
<dbReference type="EMDB" id="EMD-2916"/>
<dbReference type="EMDB" id="EMD-2918"/>
<dbReference type="EMDB" id="EMD-2919"/>
<dbReference type="EMDB" id="EMD-2920"/>
<dbReference type="EMDB" id="EMD-3529"/>
<dbReference type="EMDB" id="EMD-3530"/>
<dbReference type="EMDB" id="EMD-41169"/>
<dbReference type="EMDB" id="EMD-5027"/>
<dbReference type="EMDB" id="EMD-5895"/>
<dbReference type="EMDB" id="EMD-5896"/>
<dbReference type="EMDB" id="EMD-5897"/>
<dbReference type="EMDB" id="EMD-5916"/>
<dbReference type="EMDB" id="EMD-6779"/>
<dbReference type="EMDB" id="EMD-6781"/>
<dbReference type="EMDB" id="EMD-6782"/>
<dbReference type="EMDB" id="EMD-6783"/>
<dbReference type="EMDB" id="EMD-9140"/>
<dbReference type="EMDB" id="EMD-9141"/>
<dbReference type="EMDB" id="EMD-9996"/>
<dbReference type="EMDB" id="EMD-9997"/>
<dbReference type="SMR" id="P02550"/>
<dbReference type="CORUM" id="P02550"/>
<dbReference type="FunCoup" id="P02550">
    <property type="interactions" value="16"/>
</dbReference>
<dbReference type="IntAct" id="P02550">
    <property type="interactions" value="3"/>
</dbReference>
<dbReference type="MINT" id="P02550"/>
<dbReference type="BindingDB" id="P02550"/>
<dbReference type="ChEMBL" id="CHEMBL3658"/>
<dbReference type="DrugCentral" id="P02550"/>
<dbReference type="PeptideAtlas" id="P02550"/>
<dbReference type="ABCD" id="P02550">
    <property type="antibodies" value="1 sequenced antibody"/>
</dbReference>
<dbReference type="InParanoid" id="P02550"/>
<dbReference type="CD-CODE" id="43F5F736">
    <property type="entry name" value="Synthetic Condensate 000068"/>
</dbReference>
<dbReference type="EvolutionaryTrace" id="P02550"/>
<dbReference type="Proteomes" id="UP000008227">
    <property type="component" value="Unplaced"/>
</dbReference>
<dbReference type="Proteomes" id="UP000314985">
    <property type="component" value="Unplaced"/>
</dbReference>
<dbReference type="Proteomes" id="UP000694570">
    <property type="component" value="Unplaced"/>
</dbReference>
<dbReference type="Proteomes" id="UP000694571">
    <property type="component" value="Unplaced"/>
</dbReference>
<dbReference type="Proteomes" id="UP000694720">
    <property type="component" value="Unplaced"/>
</dbReference>
<dbReference type="Proteomes" id="UP000694722">
    <property type="component" value="Unplaced"/>
</dbReference>
<dbReference type="Proteomes" id="UP000694723">
    <property type="component" value="Unplaced"/>
</dbReference>
<dbReference type="Proteomes" id="UP000694724">
    <property type="component" value="Unplaced"/>
</dbReference>
<dbReference type="Proteomes" id="UP000694725">
    <property type="component" value="Unplaced"/>
</dbReference>
<dbReference type="Proteomes" id="UP000694726">
    <property type="component" value="Unplaced"/>
</dbReference>
<dbReference type="Proteomes" id="UP000694727">
    <property type="component" value="Unplaced"/>
</dbReference>
<dbReference type="Proteomes" id="UP000694728">
    <property type="component" value="Unplaced"/>
</dbReference>
<dbReference type="GO" id="GO:0005737">
    <property type="term" value="C:cytoplasm"/>
    <property type="evidence" value="ECO:0000318"/>
    <property type="project" value="GO_Central"/>
</dbReference>
<dbReference type="GO" id="GO:0005874">
    <property type="term" value="C:microtubule"/>
    <property type="evidence" value="ECO:0000318"/>
    <property type="project" value="GO_Central"/>
</dbReference>
<dbReference type="GO" id="GO:0031514">
    <property type="term" value="C:motile cilium"/>
    <property type="evidence" value="ECO:0007669"/>
    <property type="project" value="UniProtKB-KW"/>
</dbReference>
<dbReference type="GO" id="GO:0005525">
    <property type="term" value="F:GTP binding"/>
    <property type="evidence" value="ECO:0000318"/>
    <property type="project" value="GO_Central"/>
</dbReference>
<dbReference type="GO" id="GO:0016787">
    <property type="term" value="F:hydrolase activity"/>
    <property type="evidence" value="ECO:0007669"/>
    <property type="project" value="UniProtKB-KW"/>
</dbReference>
<dbReference type="GO" id="GO:0046872">
    <property type="term" value="F:metal ion binding"/>
    <property type="evidence" value="ECO:0007669"/>
    <property type="project" value="UniProtKB-KW"/>
</dbReference>
<dbReference type="GO" id="GO:0005200">
    <property type="term" value="F:structural constituent of cytoskeleton"/>
    <property type="evidence" value="ECO:0000318"/>
    <property type="project" value="GO_Central"/>
</dbReference>
<dbReference type="GO" id="GO:0000226">
    <property type="term" value="P:microtubule cytoskeleton organization"/>
    <property type="evidence" value="ECO:0000318"/>
    <property type="project" value="GO_Central"/>
</dbReference>
<dbReference type="GO" id="GO:0000278">
    <property type="term" value="P:mitotic cell cycle"/>
    <property type="evidence" value="ECO:0000318"/>
    <property type="project" value="GO_Central"/>
</dbReference>
<dbReference type="CDD" id="cd02186">
    <property type="entry name" value="alpha_tubulin"/>
    <property type="match status" value="1"/>
</dbReference>
<dbReference type="FunFam" id="1.10.287.600:FF:000005">
    <property type="entry name" value="Tubulin alpha chain"/>
    <property type="match status" value="1"/>
</dbReference>
<dbReference type="FunFam" id="3.30.1330.20:FF:000001">
    <property type="entry name" value="Tubulin alpha chain"/>
    <property type="match status" value="1"/>
</dbReference>
<dbReference type="FunFam" id="3.40.50.1440:FF:000002">
    <property type="entry name" value="Tubulin alpha chain"/>
    <property type="match status" value="1"/>
</dbReference>
<dbReference type="Gene3D" id="1.10.287.600">
    <property type="entry name" value="Helix hairpin bin"/>
    <property type="match status" value="1"/>
</dbReference>
<dbReference type="Gene3D" id="3.30.1330.20">
    <property type="entry name" value="Tubulin/FtsZ, C-terminal domain"/>
    <property type="match status" value="1"/>
</dbReference>
<dbReference type="Gene3D" id="3.40.50.1440">
    <property type="entry name" value="Tubulin/FtsZ, GTPase domain"/>
    <property type="match status" value="1"/>
</dbReference>
<dbReference type="InterPro" id="IPR002452">
    <property type="entry name" value="Alpha_tubulin"/>
</dbReference>
<dbReference type="InterPro" id="IPR008280">
    <property type="entry name" value="Tub_FtsZ_C"/>
</dbReference>
<dbReference type="InterPro" id="IPR000217">
    <property type="entry name" value="Tubulin"/>
</dbReference>
<dbReference type="InterPro" id="IPR037103">
    <property type="entry name" value="Tubulin/FtsZ-like_C"/>
</dbReference>
<dbReference type="InterPro" id="IPR018316">
    <property type="entry name" value="Tubulin/FtsZ_2-layer-sand-dom"/>
</dbReference>
<dbReference type="InterPro" id="IPR036525">
    <property type="entry name" value="Tubulin/FtsZ_GTPase_sf"/>
</dbReference>
<dbReference type="InterPro" id="IPR023123">
    <property type="entry name" value="Tubulin_C"/>
</dbReference>
<dbReference type="InterPro" id="IPR017975">
    <property type="entry name" value="Tubulin_CS"/>
</dbReference>
<dbReference type="InterPro" id="IPR003008">
    <property type="entry name" value="Tubulin_FtsZ_GTPase"/>
</dbReference>
<dbReference type="PANTHER" id="PTHR11588">
    <property type="entry name" value="TUBULIN"/>
    <property type="match status" value="1"/>
</dbReference>
<dbReference type="Pfam" id="PF00091">
    <property type="entry name" value="Tubulin"/>
    <property type="match status" value="1"/>
</dbReference>
<dbReference type="Pfam" id="PF03953">
    <property type="entry name" value="Tubulin_C"/>
    <property type="match status" value="1"/>
</dbReference>
<dbReference type="PRINTS" id="PR01162">
    <property type="entry name" value="ALPHATUBULIN"/>
</dbReference>
<dbReference type="PRINTS" id="PR01161">
    <property type="entry name" value="TUBULIN"/>
</dbReference>
<dbReference type="SMART" id="SM00864">
    <property type="entry name" value="Tubulin"/>
    <property type="match status" value="1"/>
</dbReference>
<dbReference type="SMART" id="SM00865">
    <property type="entry name" value="Tubulin_C"/>
    <property type="match status" value="1"/>
</dbReference>
<dbReference type="SUPFAM" id="SSF55307">
    <property type="entry name" value="Tubulin C-terminal domain-like"/>
    <property type="match status" value="1"/>
</dbReference>
<dbReference type="SUPFAM" id="SSF52490">
    <property type="entry name" value="Tubulin nucleotide-binding domain-like"/>
    <property type="match status" value="1"/>
</dbReference>
<dbReference type="PROSITE" id="PS00227">
    <property type="entry name" value="TUBULIN"/>
    <property type="match status" value="1"/>
</dbReference>
<gene>
    <name type="primary">TUBA1A</name>
</gene>